<name>Y1682_STAAW</name>
<dbReference type="EMBL" id="BA000033">
    <property type="protein sequence ID" value="BAB95547.1"/>
    <property type="molecule type" value="Genomic_DNA"/>
</dbReference>
<dbReference type="RefSeq" id="WP_000383814.1">
    <property type="nucleotide sequence ID" value="NC_003923.1"/>
</dbReference>
<dbReference type="SMR" id="Q7A0M4"/>
<dbReference type="KEGG" id="sam:MW1682"/>
<dbReference type="HOGENOM" id="CLU_115870_0_0_9"/>
<dbReference type="GO" id="GO:0005886">
    <property type="term" value="C:plasma membrane"/>
    <property type="evidence" value="ECO:0007669"/>
    <property type="project" value="UniProtKB-SubCell"/>
</dbReference>
<dbReference type="Gene3D" id="1.10.287.950">
    <property type="entry name" value="Methyl-accepting chemotaxis protein"/>
    <property type="match status" value="1"/>
</dbReference>
<dbReference type="InterPro" id="IPR009293">
    <property type="entry name" value="UPF0478"/>
</dbReference>
<dbReference type="PANTHER" id="PTHR40070">
    <property type="entry name" value="UPF0478 PROTEIN YTXG"/>
    <property type="match status" value="1"/>
</dbReference>
<dbReference type="PANTHER" id="PTHR40070:SF1">
    <property type="entry name" value="UPF0478 PROTEIN YTXG"/>
    <property type="match status" value="1"/>
</dbReference>
<dbReference type="Pfam" id="PF06103">
    <property type="entry name" value="DUF948"/>
    <property type="match status" value="1"/>
</dbReference>
<dbReference type="SUPFAM" id="SSF58104">
    <property type="entry name" value="Methyl-accepting chemotaxis protein (MCP) signaling domain"/>
    <property type="match status" value="1"/>
</dbReference>
<feature type="chain" id="PRO_0000299440" description="UPF0478 protein MW1682">
    <location>
        <begin position="1"/>
        <end position="163"/>
    </location>
</feature>
<feature type="transmembrane region" description="Helical" evidence="1">
    <location>
        <begin position="7"/>
        <end position="27"/>
    </location>
</feature>
<organism>
    <name type="scientific">Staphylococcus aureus (strain MW2)</name>
    <dbReference type="NCBI Taxonomy" id="196620"/>
    <lineage>
        <taxon>Bacteria</taxon>
        <taxon>Bacillati</taxon>
        <taxon>Bacillota</taxon>
        <taxon>Bacilli</taxon>
        <taxon>Bacillales</taxon>
        <taxon>Staphylococcaceae</taxon>
        <taxon>Staphylococcus</taxon>
    </lineage>
</organism>
<sequence length="163" mass="18002">MDWILPIAGIIAAIAFLILCIGIVAVLNSVKKNLDYVAKTLDGVEGQVQGITRETTDLLHKVNRLTEDIQGKVDRLNSVVDAVKGIGDSVQTLNSSVDRVTNSITHNISQNEDKISQVVQWSNVAMEIADKWQNRHYRRGSANYKANNVATDANHSYTSRVDK</sequence>
<accession>Q7A0M4</accession>
<keyword id="KW-1003">Cell membrane</keyword>
<keyword id="KW-0472">Membrane</keyword>
<keyword id="KW-0812">Transmembrane</keyword>
<keyword id="KW-1133">Transmembrane helix</keyword>
<proteinExistence type="inferred from homology"/>
<protein>
    <recommendedName>
        <fullName>UPF0478 protein MW1682</fullName>
    </recommendedName>
</protein>
<gene>
    <name type="ordered locus">MW1682</name>
</gene>
<evidence type="ECO:0000255" key="1"/>
<evidence type="ECO:0000305" key="2"/>
<comment type="subcellular location">
    <subcellularLocation>
        <location evidence="2">Cell membrane</location>
        <topology evidence="2">Single-pass membrane protein</topology>
    </subcellularLocation>
</comment>
<comment type="similarity">
    <text evidence="2">Belongs to the UPF0478 family.</text>
</comment>
<reference key="1">
    <citation type="journal article" date="2002" name="Lancet">
        <title>Genome and virulence determinants of high virulence community-acquired MRSA.</title>
        <authorList>
            <person name="Baba T."/>
            <person name="Takeuchi F."/>
            <person name="Kuroda M."/>
            <person name="Yuzawa H."/>
            <person name="Aoki K."/>
            <person name="Oguchi A."/>
            <person name="Nagai Y."/>
            <person name="Iwama N."/>
            <person name="Asano K."/>
            <person name="Naimi T."/>
            <person name="Kuroda H."/>
            <person name="Cui L."/>
            <person name="Yamamoto K."/>
            <person name="Hiramatsu K."/>
        </authorList>
    </citation>
    <scope>NUCLEOTIDE SEQUENCE [LARGE SCALE GENOMIC DNA]</scope>
    <source>
        <strain>MW2</strain>
    </source>
</reference>